<sequence>MATSRYEPVAEIGVGAYGTVYKARDPHSGHFVALKSVRVPNGGGAGGGLPISTVREVALLRRLEAFEHPNVVRLMDVCATARTDRETKVTLVFEHVDQDLRTYLDKAPPPGLPVETIKDLMRQFLRGLDFLHANCIVHRDLKPENILVTSGGTVKLADFGLARIYSYQMALTPVVVTLWYRAPEVLLQSTYATPVDMWSVGCIFAEMFRRKPLFCGNSEADQLGKIFDLIGLPPEDDWPRDVSLPRGAFSPRGPRPVQSVVPELEESGAQLLLEMLTFNPHKRISAFRALQHSYLHKAEGDAE</sequence>
<feature type="initiator methionine" description="Removed" evidence="2">
    <location>
        <position position="1"/>
    </location>
</feature>
<feature type="chain" id="PRO_0000405926" description="Cyclin-dependent kinase 4">
    <location>
        <begin position="2"/>
        <end position="303"/>
    </location>
</feature>
<feature type="domain" description="Protein kinase" evidence="4">
    <location>
        <begin position="6"/>
        <end position="295"/>
    </location>
</feature>
<feature type="region of interest" description="Required for binding D-type cyclins" evidence="1">
    <location>
        <begin position="50"/>
        <end position="56"/>
    </location>
</feature>
<feature type="active site" description="Proton acceptor" evidence="4 5">
    <location>
        <position position="140"/>
    </location>
</feature>
<feature type="binding site" evidence="4">
    <location>
        <begin position="12"/>
        <end position="20"/>
    </location>
    <ligand>
        <name>ATP</name>
        <dbReference type="ChEBI" id="CHEBI:30616"/>
    </ligand>
</feature>
<feature type="binding site" evidence="4">
    <location>
        <position position="35"/>
    </location>
    <ligand>
        <name>ATP</name>
        <dbReference type="ChEBI" id="CHEBI:30616"/>
    </ligand>
</feature>
<feature type="modified residue" description="N-acetylalanine" evidence="2">
    <location>
        <position position="2"/>
    </location>
</feature>
<feature type="modified residue" description="Phosphothreonine; by CAK" evidence="3">
    <location>
        <position position="172"/>
    </location>
</feature>
<reference key="1">
    <citation type="submission" date="2008-04" db="EMBL/GenBank/DDBJ databases">
        <title>Molecular clone and sequence analysis of CDK4 from black-boned sheep (Ovis aries).</title>
        <authorList>
            <person name="Deng W."/>
        </authorList>
    </citation>
    <scope>NUCLEOTIDE SEQUENCE [MRNA]</scope>
</reference>
<reference key="2">
    <citation type="submission" date="2009-04" db="EMBL/GenBank/DDBJ databases">
        <title>CDK4 cyclin-dependent kinase 4.</title>
        <authorList>
            <person name="Liu G.Y."/>
            <person name="Ge C.R."/>
        </authorList>
    </citation>
    <scope>NUCLEOTIDE SEQUENCE [MRNA]</scope>
</reference>
<reference key="3">
    <citation type="submission" date="2008-02" db="EMBL/GenBank/DDBJ databases">
        <authorList>
            <person name="Rozance P.J."/>
            <person name="LoTurco D.G."/>
        </authorList>
    </citation>
    <scope>NUCLEOTIDE SEQUENCE [MRNA] OF 39-281</scope>
</reference>
<organism>
    <name type="scientific">Ovis aries</name>
    <name type="common">Sheep</name>
    <dbReference type="NCBI Taxonomy" id="9940"/>
    <lineage>
        <taxon>Eukaryota</taxon>
        <taxon>Metazoa</taxon>
        <taxon>Chordata</taxon>
        <taxon>Craniata</taxon>
        <taxon>Vertebrata</taxon>
        <taxon>Euteleostomi</taxon>
        <taxon>Mammalia</taxon>
        <taxon>Eutheria</taxon>
        <taxon>Laurasiatheria</taxon>
        <taxon>Artiodactyla</taxon>
        <taxon>Ruminantia</taxon>
        <taxon>Pecora</taxon>
        <taxon>Bovidae</taxon>
        <taxon>Caprinae</taxon>
        <taxon>Ovis</taxon>
    </lineage>
</organism>
<comment type="function">
    <text evidence="1">Ser/Thr-kinase component of cyclin D-CDK4 (DC) complexes that phosphorylate and inhibit members of the retinoblastoma (RB) protein family including RB1 and regulate the cell-cycle during G(1)/S transition. Phosphorylation of RB1 allows dissociation of the transcription factor E2F from the RB/E2F complexes and the subsequent transcription of E2F target genes which are responsible for the progression through the G(1) phase. Hypophosphorylates RB1 in early G(1) phase. Cyclin D-CDK4 complexes are major integrators of various mitogenenic and antimitogenic signals. Also a substrate for SMAD3, phosphorylating SMAD3 in a cell-cycle-dependent manner and repressing its transcriptional activity. Component of the ternary complex, cyclin D/CDK4/CDKN1B, required for nuclear translocation and activity of the cyclin D-CDK4 complex (By similarity).</text>
</comment>
<comment type="catalytic activity">
    <reaction>
        <text>L-seryl-[protein] + ATP = O-phospho-L-seryl-[protein] + ADP + H(+)</text>
        <dbReference type="Rhea" id="RHEA:17989"/>
        <dbReference type="Rhea" id="RHEA-COMP:9863"/>
        <dbReference type="Rhea" id="RHEA-COMP:11604"/>
        <dbReference type="ChEBI" id="CHEBI:15378"/>
        <dbReference type="ChEBI" id="CHEBI:29999"/>
        <dbReference type="ChEBI" id="CHEBI:30616"/>
        <dbReference type="ChEBI" id="CHEBI:83421"/>
        <dbReference type="ChEBI" id="CHEBI:456216"/>
        <dbReference type="EC" id="2.7.11.22"/>
    </reaction>
</comment>
<comment type="catalytic activity">
    <reaction>
        <text>L-threonyl-[protein] + ATP = O-phospho-L-threonyl-[protein] + ADP + H(+)</text>
        <dbReference type="Rhea" id="RHEA:46608"/>
        <dbReference type="Rhea" id="RHEA-COMP:11060"/>
        <dbReference type="Rhea" id="RHEA-COMP:11605"/>
        <dbReference type="ChEBI" id="CHEBI:15378"/>
        <dbReference type="ChEBI" id="CHEBI:30013"/>
        <dbReference type="ChEBI" id="CHEBI:30616"/>
        <dbReference type="ChEBI" id="CHEBI:61977"/>
        <dbReference type="ChEBI" id="CHEBI:456216"/>
        <dbReference type="EC" id="2.7.11.22"/>
    </reaction>
</comment>
<comment type="activity regulation">
    <text>Both phosphorylation at Thr-172 and binding of a D-type cyclin are necessary for enzymatic activity. Full activation of the cyclin-D-CDK4 complex appears to require other factors such as recruitment of the substrate via a substrate recruitment motif, and/or formation of the CDKN1B ternary complex. Inhibited by INK4 family members. In resting cells, the non-tyrosine-phosphorylated form of CDKN1B prevents phosphorylation at Thr-172 and inactivation, while, in proliferating cells, tyrosine phosphorylation of CDKN1B allows phosphorylation of Thr-172 of CDK4 and subsequent activation.</text>
</comment>
<comment type="subunit">
    <text evidence="2 3">Component of the D-CDK4 complex, composed of CDK4 and some D-type G1 cyclin (CCND1, CCND2 or CCND3). Interacts directly in the complex with CCND1, CCND2 or CCND3. Interacts with SEI1 and ZNF655. Forms a ternary complex, cyclin D-CDK4-CDKN1B, involved in modulating CDK4 enzymatic activity. Interacts directly with CDKN1B (phosphorylated on 'Tyr-88' and 'Tyr-89'); the interaction allows assembly of the cyclin D-CDK4 complex, Thr-172 phosphorylation, nuclear translocation and enhances the cyclin D-CDK4 complex activity. CDK4 activity is either inhibited or enhanced depending on stoichiometry of complex. The non-tyrosine-phosphorylated form of CDKN1B prevents T-loop phosphorylation of CDK4 producing inactive CDK4. Interacts (unphosphorylated form) with CDK2. Also forms ternary complexes with CDKN1A or CDKN2A. Interacts directly with CDKN1A (via its N-terminal); the interaction promotes the assembly of the cyclin D-CDK4 complex, its nuclear translocation and promotes the cyclin D-dependent enzyme activity of CDK4. Interacts with FNIP1 and FNIP2.</text>
</comment>
<comment type="subcellular location">
    <subcellularLocation>
        <location evidence="2">Cytoplasm</location>
    </subcellularLocation>
    <subcellularLocation>
        <location evidence="2">Nucleus</location>
    </subcellularLocation>
    <subcellularLocation>
        <location evidence="2">Nucleus membrane</location>
    </subcellularLocation>
    <text evidence="2">Cytoplasmic when non-complexed. Forms a cyclin D-CDK4 complex in the cytoplasm as cells progress through G(1) phase. The complex accumulates on the nuclear membrane and enters the nucleus on transition from G(1) to S phase. Also present in nucleoli and heterochromatin lumps. Colocalizes with RB1 after release into the nucleus (By similarity).</text>
</comment>
<comment type="similarity">
    <text evidence="6">Belongs to the protein kinase superfamily. CMGC Ser/Thr protein kinase family. CDC2/CDKX subfamily.</text>
</comment>
<protein>
    <recommendedName>
        <fullName>Cyclin-dependent kinase 4</fullName>
        <ecNumber>2.7.11.22</ecNumber>
    </recommendedName>
    <alternativeName>
        <fullName>Cell division protein kinase 4</fullName>
    </alternativeName>
</protein>
<keyword id="KW-0007">Acetylation</keyword>
<keyword id="KW-0067">ATP-binding</keyword>
<keyword id="KW-0131">Cell cycle</keyword>
<keyword id="KW-0132">Cell division</keyword>
<keyword id="KW-0963">Cytoplasm</keyword>
<keyword id="KW-0418">Kinase</keyword>
<keyword id="KW-0472">Membrane</keyword>
<keyword id="KW-0547">Nucleotide-binding</keyword>
<keyword id="KW-0539">Nucleus</keyword>
<keyword id="KW-0597">Phosphoprotein</keyword>
<keyword id="KW-0656">Proto-oncogene</keyword>
<keyword id="KW-1185">Reference proteome</keyword>
<keyword id="KW-0723">Serine/threonine-protein kinase</keyword>
<keyword id="KW-0808">Transferase</keyword>
<accession>B2MVY4</accession>
<accession>B2CL06</accession>
<proteinExistence type="evidence at transcript level"/>
<evidence type="ECO:0000250" key="1"/>
<evidence type="ECO:0000250" key="2">
    <source>
        <dbReference type="UniProtKB" id="P11802"/>
    </source>
</evidence>
<evidence type="ECO:0000250" key="3">
    <source>
        <dbReference type="UniProtKB" id="P30285"/>
    </source>
</evidence>
<evidence type="ECO:0000255" key="4">
    <source>
        <dbReference type="PROSITE-ProRule" id="PRU00159"/>
    </source>
</evidence>
<evidence type="ECO:0000255" key="5">
    <source>
        <dbReference type="PROSITE-ProRule" id="PRU10027"/>
    </source>
</evidence>
<evidence type="ECO:0000305" key="6"/>
<name>CDK4_SHEEP</name>
<dbReference type="EC" id="2.7.11.22"/>
<dbReference type="EMBL" id="EU626223">
    <property type="protein sequence ID" value="ACC93618.1"/>
    <property type="molecule type" value="mRNA"/>
</dbReference>
<dbReference type="EMBL" id="FJ943997">
    <property type="protein sequence ID" value="ACR46652.1"/>
    <property type="molecule type" value="mRNA"/>
</dbReference>
<dbReference type="EMBL" id="EU525168">
    <property type="protein sequence ID" value="ACB20722.1"/>
    <property type="molecule type" value="mRNA"/>
</dbReference>
<dbReference type="RefSeq" id="NP_001120741.1">
    <property type="nucleotide sequence ID" value="NM_001127269.1"/>
</dbReference>
<dbReference type="RefSeq" id="XP_012013938.2">
    <property type="nucleotide sequence ID" value="XM_012158548.4"/>
</dbReference>
<dbReference type="SMR" id="B2MVY4"/>
<dbReference type="STRING" id="9940.ENSOARP00000005709"/>
<dbReference type="PaxDb" id="9940-ENSOARP00000005709"/>
<dbReference type="GeneID" id="100144756"/>
<dbReference type="KEGG" id="oas:100144756"/>
<dbReference type="CTD" id="1019"/>
<dbReference type="eggNOG" id="KOG0594">
    <property type="taxonomic scope" value="Eukaryota"/>
</dbReference>
<dbReference type="OrthoDB" id="1732493at2759"/>
<dbReference type="Proteomes" id="UP000002356">
    <property type="component" value="Unplaced"/>
</dbReference>
<dbReference type="GO" id="GO:0005923">
    <property type="term" value="C:bicellular tight junction"/>
    <property type="evidence" value="ECO:0007669"/>
    <property type="project" value="Ensembl"/>
</dbReference>
<dbReference type="GO" id="GO:0000785">
    <property type="term" value="C:chromatin"/>
    <property type="evidence" value="ECO:0007669"/>
    <property type="project" value="Ensembl"/>
</dbReference>
<dbReference type="GO" id="GO:0097128">
    <property type="term" value="C:cyclin D1-CDK4 complex"/>
    <property type="evidence" value="ECO:0007669"/>
    <property type="project" value="Ensembl"/>
</dbReference>
<dbReference type="GO" id="GO:0097129">
    <property type="term" value="C:cyclin D2-CDK4 complex"/>
    <property type="evidence" value="ECO:0007669"/>
    <property type="project" value="Ensembl"/>
</dbReference>
<dbReference type="GO" id="GO:0097130">
    <property type="term" value="C:cyclin D3-CDK4 complex"/>
    <property type="evidence" value="ECO:0007669"/>
    <property type="project" value="Ensembl"/>
</dbReference>
<dbReference type="GO" id="GO:0005829">
    <property type="term" value="C:cytosol"/>
    <property type="evidence" value="ECO:0007669"/>
    <property type="project" value="Ensembl"/>
</dbReference>
<dbReference type="GO" id="GO:0031965">
    <property type="term" value="C:nuclear membrane"/>
    <property type="evidence" value="ECO:0007669"/>
    <property type="project" value="UniProtKB-SubCell"/>
</dbReference>
<dbReference type="GO" id="GO:0005730">
    <property type="term" value="C:nucleolus"/>
    <property type="evidence" value="ECO:0007669"/>
    <property type="project" value="Ensembl"/>
</dbReference>
<dbReference type="GO" id="GO:0005654">
    <property type="term" value="C:nucleoplasm"/>
    <property type="evidence" value="ECO:0007669"/>
    <property type="project" value="Ensembl"/>
</dbReference>
<dbReference type="GO" id="GO:0005634">
    <property type="term" value="C:nucleus"/>
    <property type="evidence" value="ECO:0000250"/>
    <property type="project" value="UniProtKB"/>
</dbReference>
<dbReference type="GO" id="GO:0005667">
    <property type="term" value="C:transcription regulator complex"/>
    <property type="evidence" value="ECO:0007669"/>
    <property type="project" value="Ensembl"/>
</dbReference>
<dbReference type="GO" id="GO:0005524">
    <property type="term" value="F:ATP binding"/>
    <property type="evidence" value="ECO:0007669"/>
    <property type="project" value="UniProtKB-KW"/>
</dbReference>
<dbReference type="GO" id="GO:0030332">
    <property type="term" value="F:cyclin binding"/>
    <property type="evidence" value="ECO:0007669"/>
    <property type="project" value="Ensembl"/>
</dbReference>
<dbReference type="GO" id="GO:0004693">
    <property type="term" value="F:cyclin-dependent protein serine/threonine kinase activity"/>
    <property type="evidence" value="ECO:0007669"/>
    <property type="project" value="UniProtKB-EC"/>
</dbReference>
<dbReference type="GO" id="GO:0106310">
    <property type="term" value="F:protein serine kinase activity"/>
    <property type="evidence" value="ECO:0007669"/>
    <property type="project" value="RHEA"/>
</dbReference>
<dbReference type="GO" id="GO:0051301">
    <property type="term" value="P:cell division"/>
    <property type="evidence" value="ECO:0007669"/>
    <property type="project" value="UniProtKB-KW"/>
</dbReference>
<dbReference type="GO" id="GO:0071353">
    <property type="term" value="P:cellular response to interleukin-4"/>
    <property type="evidence" value="ECO:0007669"/>
    <property type="project" value="Ensembl"/>
</dbReference>
<dbReference type="GO" id="GO:1904637">
    <property type="term" value="P:cellular response to ionomycin"/>
    <property type="evidence" value="ECO:0007669"/>
    <property type="project" value="Ensembl"/>
</dbReference>
<dbReference type="GO" id="GO:0071222">
    <property type="term" value="P:cellular response to lipopolysaccharide"/>
    <property type="evidence" value="ECO:0007669"/>
    <property type="project" value="Ensembl"/>
</dbReference>
<dbReference type="GO" id="GO:1904628">
    <property type="term" value="P:cellular response to phorbol 13-acetate 12-myristate"/>
    <property type="evidence" value="ECO:0007669"/>
    <property type="project" value="Ensembl"/>
</dbReference>
<dbReference type="GO" id="GO:0000082">
    <property type="term" value="P:G1/S transition of mitotic cell cycle"/>
    <property type="evidence" value="ECO:0007669"/>
    <property type="project" value="Ensembl"/>
</dbReference>
<dbReference type="GO" id="GO:0048146">
    <property type="term" value="P:positive regulation of fibroblast proliferation"/>
    <property type="evidence" value="ECO:0007669"/>
    <property type="project" value="Ensembl"/>
</dbReference>
<dbReference type="GO" id="GO:0010971">
    <property type="term" value="P:positive regulation of G2/M transition of mitotic cell cycle"/>
    <property type="evidence" value="ECO:0007669"/>
    <property type="project" value="Ensembl"/>
</dbReference>
<dbReference type="GO" id="GO:0010468">
    <property type="term" value="P:regulation of gene expression"/>
    <property type="evidence" value="ECO:0007669"/>
    <property type="project" value="Ensembl"/>
</dbReference>
<dbReference type="GO" id="GO:0061469">
    <property type="term" value="P:regulation of type B pancreatic cell proliferation"/>
    <property type="evidence" value="ECO:0007669"/>
    <property type="project" value="Ensembl"/>
</dbReference>
<dbReference type="GO" id="GO:0009410">
    <property type="term" value="P:response to xenobiotic stimulus"/>
    <property type="evidence" value="ECO:0007669"/>
    <property type="project" value="Ensembl"/>
</dbReference>
<dbReference type="GO" id="GO:0007165">
    <property type="term" value="P:signal transduction"/>
    <property type="evidence" value="ECO:0007669"/>
    <property type="project" value="Ensembl"/>
</dbReference>
<dbReference type="CDD" id="cd07863">
    <property type="entry name" value="STKc_CDK4"/>
    <property type="match status" value="1"/>
</dbReference>
<dbReference type="FunFam" id="3.30.200.20:FF:000124">
    <property type="entry name" value="Cyclin-dependent kinase 4"/>
    <property type="match status" value="1"/>
</dbReference>
<dbReference type="FunFam" id="1.10.510.10:FF:000205">
    <property type="entry name" value="Cyclin-dependent kinase 6"/>
    <property type="match status" value="1"/>
</dbReference>
<dbReference type="Gene3D" id="3.30.200.20">
    <property type="entry name" value="Phosphorylase Kinase, domain 1"/>
    <property type="match status" value="1"/>
</dbReference>
<dbReference type="Gene3D" id="1.10.510.10">
    <property type="entry name" value="Transferase(Phosphotransferase) domain 1"/>
    <property type="match status" value="1"/>
</dbReference>
<dbReference type="InterPro" id="IPR050108">
    <property type="entry name" value="CDK"/>
</dbReference>
<dbReference type="InterPro" id="IPR011009">
    <property type="entry name" value="Kinase-like_dom_sf"/>
</dbReference>
<dbReference type="InterPro" id="IPR000719">
    <property type="entry name" value="Prot_kinase_dom"/>
</dbReference>
<dbReference type="InterPro" id="IPR017441">
    <property type="entry name" value="Protein_kinase_ATP_BS"/>
</dbReference>
<dbReference type="InterPro" id="IPR008271">
    <property type="entry name" value="Ser/Thr_kinase_AS"/>
</dbReference>
<dbReference type="PANTHER" id="PTHR24056">
    <property type="entry name" value="CELL DIVISION PROTEIN KINASE"/>
    <property type="match status" value="1"/>
</dbReference>
<dbReference type="PANTHER" id="PTHR24056:SF129">
    <property type="entry name" value="CYCLIN-DEPENDENT KINASE 4"/>
    <property type="match status" value="1"/>
</dbReference>
<dbReference type="Pfam" id="PF00069">
    <property type="entry name" value="Pkinase"/>
    <property type="match status" value="1"/>
</dbReference>
<dbReference type="SMART" id="SM00220">
    <property type="entry name" value="S_TKc"/>
    <property type="match status" value="1"/>
</dbReference>
<dbReference type="SUPFAM" id="SSF56112">
    <property type="entry name" value="Protein kinase-like (PK-like)"/>
    <property type="match status" value="1"/>
</dbReference>
<dbReference type="PROSITE" id="PS00107">
    <property type="entry name" value="PROTEIN_KINASE_ATP"/>
    <property type="match status" value="1"/>
</dbReference>
<dbReference type="PROSITE" id="PS50011">
    <property type="entry name" value="PROTEIN_KINASE_DOM"/>
    <property type="match status" value="1"/>
</dbReference>
<dbReference type="PROSITE" id="PS00108">
    <property type="entry name" value="PROTEIN_KINASE_ST"/>
    <property type="match status" value="1"/>
</dbReference>